<dbReference type="EC" id="1.14.-.-"/>
<dbReference type="EMBL" id="AL353865">
    <property type="protein sequence ID" value="CAB88993.1"/>
    <property type="status" value="ALT_SEQ"/>
    <property type="molecule type" value="Genomic_DNA"/>
</dbReference>
<dbReference type="EMBL" id="CP002686">
    <property type="protein sequence ID" value="AEE77881.1"/>
    <property type="status" value="ALT_SEQ"/>
    <property type="molecule type" value="Genomic_DNA"/>
</dbReference>
<dbReference type="EMBL" id="DQ446729">
    <property type="protein sequence ID" value="ABE65988.1"/>
    <property type="molecule type" value="mRNA"/>
</dbReference>
<dbReference type="PIR" id="T49141">
    <property type="entry name" value="T49141"/>
</dbReference>
<dbReference type="RefSeq" id="NP_190011.1">
    <property type="nucleotide sequence ID" value="NM_114293.2"/>
</dbReference>
<dbReference type="SMR" id="Q9LXM3"/>
<dbReference type="FunCoup" id="Q9LXM3">
    <property type="interactions" value="267"/>
</dbReference>
<dbReference type="STRING" id="3702.Q9LXM3"/>
<dbReference type="PaxDb" id="3702-AT3G44250.1"/>
<dbReference type="ProteomicsDB" id="240454">
    <molecule id="Q9LXM3-1"/>
</dbReference>
<dbReference type="GeneID" id="823550"/>
<dbReference type="KEGG" id="ath:AT3G44250"/>
<dbReference type="Araport" id="AT3G44250"/>
<dbReference type="TAIR" id="AT3G44250">
    <property type="gene designation" value="CYP71B38"/>
</dbReference>
<dbReference type="eggNOG" id="KOG0156">
    <property type="taxonomic scope" value="Eukaryota"/>
</dbReference>
<dbReference type="HOGENOM" id="CLU_001570_4_1_1"/>
<dbReference type="InParanoid" id="Q9LXM3"/>
<dbReference type="PhylomeDB" id="Q9LXM3"/>
<dbReference type="BioCyc" id="ARA:AT3G44250-MONOMER"/>
<dbReference type="PRO" id="PR:Q9LXM3"/>
<dbReference type="Proteomes" id="UP000006548">
    <property type="component" value="Chromosome 3"/>
</dbReference>
<dbReference type="ExpressionAtlas" id="Q9LXM3">
    <property type="expression patterns" value="baseline and differential"/>
</dbReference>
<dbReference type="GO" id="GO:0016020">
    <property type="term" value="C:membrane"/>
    <property type="evidence" value="ECO:0007669"/>
    <property type="project" value="UniProtKB-SubCell"/>
</dbReference>
<dbReference type="GO" id="GO:0020037">
    <property type="term" value="F:heme binding"/>
    <property type="evidence" value="ECO:0007669"/>
    <property type="project" value="InterPro"/>
</dbReference>
<dbReference type="GO" id="GO:0005506">
    <property type="term" value="F:iron ion binding"/>
    <property type="evidence" value="ECO:0007669"/>
    <property type="project" value="InterPro"/>
</dbReference>
<dbReference type="GO" id="GO:0004497">
    <property type="term" value="F:monooxygenase activity"/>
    <property type="evidence" value="ECO:0007669"/>
    <property type="project" value="UniProtKB-KW"/>
</dbReference>
<dbReference type="GO" id="GO:0016705">
    <property type="term" value="F:oxidoreductase activity, acting on paired donors, with incorporation or reduction of molecular oxygen"/>
    <property type="evidence" value="ECO:0007669"/>
    <property type="project" value="InterPro"/>
</dbReference>
<dbReference type="CDD" id="cd11072">
    <property type="entry name" value="CYP71-like"/>
    <property type="match status" value="1"/>
</dbReference>
<dbReference type="FunFam" id="1.10.630.10:FF:000011">
    <property type="entry name" value="Cytochrome P450 83B1"/>
    <property type="match status" value="1"/>
</dbReference>
<dbReference type="Gene3D" id="1.10.630.10">
    <property type="entry name" value="Cytochrome P450"/>
    <property type="match status" value="1"/>
</dbReference>
<dbReference type="InterPro" id="IPR001128">
    <property type="entry name" value="Cyt_P450"/>
</dbReference>
<dbReference type="InterPro" id="IPR017972">
    <property type="entry name" value="Cyt_P450_CS"/>
</dbReference>
<dbReference type="InterPro" id="IPR002401">
    <property type="entry name" value="Cyt_P450_E_grp-I"/>
</dbReference>
<dbReference type="InterPro" id="IPR036396">
    <property type="entry name" value="Cyt_P450_sf"/>
</dbReference>
<dbReference type="InterPro" id="IPR050193">
    <property type="entry name" value="Cytochrome_P450_71"/>
</dbReference>
<dbReference type="PANTHER" id="PTHR47956">
    <property type="entry name" value="CYTOCHROME P450 71B11-RELATED"/>
    <property type="match status" value="1"/>
</dbReference>
<dbReference type="PANTHER" id="PTHR47956:SF6">
    <property type="entry name" value="CYTOCHROME P450 71B38-RELATED"/>
    <property type="match status" value="1"/>
</dbReference>
<dbReference type="Pfam" id="PF00067">
    <property type="entry name" value="p450"/>
    <property type="match status" value="1"/>
</dbReference>
<dbReference type="PRINTS" id="PR00463">
    <property type="entry name" value="EP450I"/>
</dbReference>
<dbReference type="PRINTS" id="PR00385">
    <property type="entry name" value="P450"/>
</dbReference>
<dbReference type="SUPFAM" id="SSF48264">
    <property type="entry name" value="Cytochrome P450"/>
    <property type="match status" value="1"/>
</dbReference>
<dbReference type="PROSITE" id="PS00086">
    <property type="entry name" value="CYTOCHROME_P450"/>
    <property type="match status" value="1"/>
</dbReference>
<proteinExistence type="evidence at transcript level"/>
<reference key="1">
    <citation type="journal article" date="2000" name="Nature">
        <title>Sequence and analysis of chromosome 3 of the plant Arabidopsis thaliana.</title>
        <authorList>
            <person name="Salanoubat M."/>
            <person name="Lemcke K."/>
            <person name="Rieger M."/>
            <person name="Ansorge W."/>
            <person name="Unseld M."/>
            <person name="Fartmann B."/>
            <person name="Valle G."/>
            <person name="Bloecker H."/>
            <person name="Perez-Alonso M."/>
            <person name="Obermaier B."/>
            <person name="Delseny M."/>
            <person name="Boutry M."/>
            <person name="Grivell L.A."/>
            <person name="Mache R."/>
            <person name="Puigdomenech P."/>
            <person name="De Simone V."/>
            <person name="Choisne N."/>
            <person name="Artiguenave F."/>
            <person name="Robert C."/>
            <person name="Brottier P."/>
            <person name="Wincker P."/>
            <person name="Cattolico L."/>
            <person name="Weissenbach J."/>
            <person name="Saurin W."/>
            <person name="Quetier F."/>
            <person name="Schaefer M."/>
            <person name="Mueller-Auer S."/>
            <person name="Gabel C."/>
            <person name="Fuchs M."/>
            <person name="Benes V."/>
            <person name="Wurmbach E."/>
            <person name="Drzonek H."/>
            <person name="Erfle H."/>
            <person name="Jordan N."/>
            <person name="Bangert S."/>
            <person name="Wiedelmann R."/>
            <person name="Kranz H."/>
            <person name="Voss H."/>
            <person name="Holland R."/>
            <person name="Brandt P."/>
            <person name="Nyakatura G."/>
            <person name="Vezzi A."/>
            <person name="D'Angelo M."/>
            <person name="Pallavicini A."/>
            <person name="Toppo S."/>
            <person name="Simionati B."/>
            <person name="Conrad A."/>
            <person name="Hornischer K."/>
            <person name="Kauer G."/>
            <person name="Loehnert T.-H."/>
            <person name="Nordsiek G."/>
            <person name="Reichelt J."/>
            <person name="Scharfe M."/>
            <person name="Schoen O."/>
            <person name="Bargues M."/>
            <person name="Terol J."/>
            <person name="Climent J."/>
            <person name="Navarro P."/>
            <person name="Collado C."/>
            <person name="Perez-Perez A."/>
            <person name="Ottenwaelder B."/>
            <person name="Duchemin D."/>
            <person name="Cooke R."/>
            <person name="Laudie M."/>
            <person name="Berger-Llauro C."/>
            <person name="Purnelle B."/>
            <person name="Masuy D."/>
            <person name="de Haan M."/>
            <person name="Maarse A.C."/>
            <person name="Alcaraz J.-P."/>
            <person name="Cottet A."/>
            <person name="Casacuberta E."/>
            <person name="Monfort A."/>
            <person name="Argiriou A."/>
            <person name="Flores M."/>
            <person name="Liguori R."/>
            <person name="Vitale D."/>
            <person name="Mannhaupt G."/>
            <person name="Haase D."/>
            <person name="Schoof H."/>
            <person name="Rudd S."/>
            <person name="Zaccaria P."/>
            <person name="Mewes H.-W."/>
            <person name="Mayer K.F.X."/>
            <person name="Kaul S."/>
            <person name="Town C.D."/>
            <person name="Koo H.L."/>
            <person name="Tallon L.J."/>
            <person name="Jenkins J."/>
            <person name="Rooney T."/>
            <person name="Rizzo M."/>
            <person name="Walts A."/>
            <person name="Utterback T."/>
            <person name="Fujii C.Y."/>
            <person name="Shea T.P."/>
            <person name="Creasy T.H."/>
            <person name="Haas B."/>
            <person name="Maiti R."/>
            <person name="Wu D."/>
            <person name="Peterson J."/>
            <person name="Van Aken S."/>
            <person name="Pai G."/>
            <person name="Militscher J."/>
            <person name="Sellers P."/>
            <person name="Gill J.E."/>
            <person name="Feldblyum T.V."/>
            <person name="Preuss D."/>
            <person name="Lin X."/>
            <person name="Nierman W.C."/>
            <person name="Salzberg S.L."/>
            <person name="White O."/>
            <person name="Venter J.C."/>
            <person name="Fraser C.M."/>
            <person name="Kaneko T."/>
            <person name="Nakamura Y."/>
            <person name="Sato S."/>
            <person name="Kato T."/>
            <person name="Asamizu E."/>
            <person name="Sasamoto S."/>
            <person name="Kimura T."/>
            <person name="Idesawa K."/>
            <person name="Kawashima K."/>
            <person name="Kishida Y."/>
            <person name="Kiyokawa C."/>
            <person name="Kohara M."/>
            <person name="Matsumoto M."/>
            <person name="Matsuno A."/>
            <person name="Muraki A."/>
            <person name="Nakayama S."/>
            <person name="Nakazaki N."/>
            <person name="Shinpo S."/>
            <person name="Takeuchi C."/>
            <person name="Wada T."/>
            <person name="Watanabe A."/>
            <person name="Yamada M."/>
            <person name="Yasuda M."/>
            <person name="Tabata S."/>
        </authorList>
    </citation>
    <scope>NUCLEOTIDE SEQUENCE [LARGE SCALE GENOMIC DNA]</scope>
    <source>
        <strain>cv. Columbia</strain>
    </source>
</reference>
<reference key="2">
    <citation type="journal article" date="2017" name="Plant J.">
        <title>Araport11: a complete reannotation of the Arabidopsis thaliana reference genome.</title>
        <authorList>
            <person name="Cheng C.Y."/>
            <person name="Krishnakumar V."/>
            <person name="Chan A.P."/>
            <person name="Thibaud-Nissen F."/>
            <person name="Schobel S."/>
            <person name="Town C.D."/>
        </authorList>
    </citation>
    <scope>GENOME REANNOTATION</scope>
    <source>
        <strain>cv. Columbia</strain>
    </source>
</reference>
<reference key="3">
    <citation type="journal article" date="2006" name="Plant Biotechnol. J.">
        <title>Simultaneous high-throughput recombinational cloning of open reading frames in closed and open configurations.</title>
        <authorList>
            <person name="Underwood B.A."/>
            <person name="Vanderhaeghen R."/>
            <person name="Whitford R."/>
            <person name="Town C.D."/>
            <person name="Hilson P."/>
        </authorList>
    </citation>
    <scope>NUCLEOTIDE SEQUENCE [LARGE SCALE MRNA] (ISOFORM 2)</scope>
    <source>
        <strain>cv. Columbia</strain>
    </source>
</reference>
<reference key="4">
    <citation type="unpublished observations" date="2001-04">
        <title>The Arabidopsis P450 site at http://www.p450.kvl.dk/.</title>
        <authorList>
            <person name="Bak S."/>
            <person name="Paquette S."/>
        </authorList>
    </citation>
    <scope>CONCEPTUAL TRANSLATION</scope>
</reference>
<accession>Q9LXM3</accession>
<accession>F4J1W9</accession>
<accession>Q1PEI9</accession>
<name>C71BZ_ARATH</name>
<feature type="chain" id="PRO_0000052112" description="Cytochrome P450 71B38">
    <location>
        <begin position="1"/>
        <end position="500"/>
    </location>
</feature>
<feature type="transmembrane region" description="Helical" evidence="2">
    <location>
        <begin position="3"/>
        <end position="23"/>
    </location>
</feature>
<feature type="binding site" description="axial binding residue" evidence="1">
    <location>
        <position position="441"/>
    </location>
    <ligand>
        <name>heme</name>
        <dbReference type="ChEBI" id="CHEBI:30413"/>
    </ligand>
    <ligandPart>
        <name>Fe</name>
        <dbReference type="ChEBI" id="CHEBI:18248"/>
    </ligandPart>
</feature>
<feature type="splice variant" id="VSP_042262" description="In isoform 2." evidence="3">
    <original>KSVDETQNSSVDLRKVLFSFTASIICRLA</original>
    <variation>NLLMS</variation>
    <location>
        <begin position="157"/>
        <end position="185"/>
    </location>
</feature>
<sequence>MSIFLCFLLLLPLSLILFKKLLPSKGKLPPGPIGLPIIGNLHQLGKLLYKSFHKISQEYGPVVLLRLGVVPVIVVSSKEGAEEVLKTHDLETCTRPKTAATGLFTYNFKDIGFAPFGDDWREMRKITTLELFSVKKLKSFRYIREEESELLVKKISKSVDETQNSSVDLRKVLFSFTASIICRLAFGQNFHQCDFVDMEKVEELVLESEANLGTFAFADFFPGGWLIDRISGQHSRVNKAFYKLTNFYKHVIDDHLKTGQPQDHSDIVSVMLDMINKPTKADSFKVTYDHLKGVMSDIFLAGVNGGANTMIWTLTELSRHPRVMKKLQEEIRAMLGPNKERITEEDLEKVEYLKLVMVETFRLHPPAPLLLPRLTMSDIKIQGYNIPKNTMIQINTYAIGRDPKYWKQPGEFIPERFLDSPIDYKGQHFELLPFGAGRRICPGMATGITMVELGLLNLLYFFDWSLPNGMTIEDIDMEEDEGFAIAKKVPLVLIQTSHRW</sequence>
<protein>
    <recommendedName>
        <fullName>Cytochrome P450 71B38</fullName>
        <ecNumber>1.14.-.-</ecNumber>
    </recommendedName>
</protein>
<organism>
    <name type="scientific">Arabidopsis thaliana</name>
    <name type="common">Mouse-ear cress</name>
    <dbReference type="NCBI Taxonomy" id="3702"/>
    <lineage>
        <taxon>Eukaryota</taxon>
        <taxon>Viridiplantae</taxon>
        <taxon>Streptophyta</taxon>
        <taxon>Embryophyta</taxon>
        <taxon>Tracheophyta</taxon>
        <taxon>Spermatophyta</taxon>
        <taxon>Magnoliopsida</taxon>
        <taxon>eudicotyledons</taxon>
        <taxon>Gunneridae</taxon>
        <taxon>Pentapetalae</taxon>
        <taxon>rosids</taxon>
        <taxon>malvids</taxon>
        <taxon>Brassicales</taxon>
        <taxon>Brassicaceae</taxon>
        <taxon>Camelineae</taxon>
        <taxon>Arabidopsis</taxon>
    </lineage>
</organism>
<keyword id="KW-0025">Alternative splicing</keyword>
<keyword id="KW-0349">Heme</keyword>
<keyword id="KW-0408">Iron</keyword>
<keyword id="KW-0472">Membrane</keyword>
<keyword id="KW-0479">Metal-binding</keyword>
<keyword id="KW-0503">Monooxygenase</keyword>
<keyword id="KW-0560">Oxidoreductase</keyword>
<keyword id="KW-1185">Reference proteome</keyword>
<keyword id="KW-0812">Transmembrane</keyword>
<keyword id="KW-1133">Transmembrane helix</keyword>
<gene>
    <name type="primary">CYP71B38</name>
    <name type="ordered locus">At3g44250</name>
    <name type="ORF">T10D17_40</name>
</gene>
<evidence type="ECO:0000250" key="1"/>
<evidence type="ECO:0000255" key="2"/>
<evidence type="ECO:0000303" key="3">
    <source>
    </source>
</evidence>
<evidence type="ECO:0000305" key="4"/>
<comment type="cofactor">
    <cofactor evidence="1">
        <name>heme</name>
        <dbReference type="ChEBI" id="CHEBI:30413"/>
    </cofactor>
</comment>
<comment type="subcellular location">
    <subcellularLocation>
        <location evidence="4">Membrane</location>
        <topology evidence="4">Single-pass membrane protein</topology>
    </subcellularLocation>
</comment>
<comment type="alternative products">
    <event type="alternative splicing"/>
    <isoform>
        <id>Q9LXM3-1</id>
        <name>1</name>
        <sequence type="displayed"/>
    </isoform>
    <isoform>
        <id>Q9LXM3-2</id>
        <name>2</name>
        <sequence type="described" ref="VSP_042262"/>
    </isoform>
</comment>
<comment type="similarity">
    <text evidence="4">Belongs to the cytochrome P450 family.</text>
</comment>
<comment type="sequence caution" evidence="4">
    <conflict type="erroneous gene model prediction">
        <sequence resource="EMBL-CDS" id="AEE77881"/>
    </conflict>
</comment>
<comment type="sequence caution" evidence="4">
    <conflict type="erroneous gene model prediction">
        <sequence resource="EMBL-CDS" id="CAB88993"/>
    </conflict>
</comment>